<proteinExistence type="inferred from homology"/>
<keyword id="KW-0004">4Fe-4S</keyword>
<keyword id="KW-0408">Iron</keyword>
<keyword id="KW-0411">Iron-sulfur</keyword>
<keyword id="KW-0414">Isoprene biosynthesis</keyword>
<keyword id="KW-0479">Metal-binding</keyword>
<keyword id="KW-0560">Oxidoreductase</keyword>
<keyword id="KW-1185">Reference proteome</keyword>
<evidence type="ECO:0000255" key="1">
    <source>
        <dbReference type="HAMAP-Rule" id="MF_00159"/>
    </source>
</evidence>
<accession>Q1IRS5</accession>
<sequence length="413" mass="45074">MPTIYRRKTPVVRIGDVWVGSDAPVVVQSMTNTDTADVDSTIKQCIALARAGSELIRVTVNNDDAAKGVPHLVDGLAKIGIHTPIIGDFHYNGHILLKKYPDCAKALAKYRINPGNVSIGRKDDDNFKAMVDVAVENQKPVRIGVNWGSLDQQLLAKMMDQNAKLAEPKEARDVMMEAMIVSALNSAAIAERYGLRKDQIILSAKVSGVQDLIDVYRDLAKRCDYVLHLGLTEAGMGAKGVVASTAGLSVLLLEGIGDTIRVSLTPKPNGDRTEEVLVAQQILQSMAIRSFTPQVTACPGCGRTTSTFFQELAERIQNYIREQMPQWKTRYTGVEEMKVAVMGCVVNGPGESKHANIGISLPGTFEEPKAPVYVDGRLMTTLKGDKIVEEFTTILNEYVDNRYAKKAEEAVGV</sequence>
<dbReference type="EC" id="1.17.7.3" evidence="1"/>
<dbReference type="EMBL" id="CP000360">
    <property type="protein sequence ID" value="ABF40425.1"/>
    <property type="molecule type" value="Genomic_DNA"/>
</dbReference>
<dbReference type="RefSeq" id="WP_011522227.1">
    <property type="nucleotide sequence ID" value="NC_008009.1"/>
</dbReference>
<dbReference type="SMR" id="Q1IRS5"/>
<dbReference type="STRING" id="204669.Acid345_1423"/>
<dbReference type="EnsemblBacteria" id="ABF40425">
    <property type="protein sequence ID" value="ABF40425"/>
    <property type="gene ID" value="Acid345_1423"/>
</dbReference>
<dbReference type="KEGG" id="aba:Acid345_1423"/>
<dbReference type="eggNOG" id="COG0821">
    <property type="taxonomic scope" value="Bacteria"/>
</dbReference>
<dbReference type="HOGENOM" id="CLU_042258_1_0_0"/>
<dbReference type="OrthoDB" id="9803214at2"/>
<dbReference type="UniPathway" id="UPA00056">
    <property type="reaction ID" value="UER00096"/>
</dbReference>
<dbReference type="Proteomes" id="UP000002432">
    <property type="component" value="Chromosome"/>
</dbReference>
<dbReference type="GO" id="GO:0051539">
    <property type="term" value="F:4 iron, 4 sulfur cluster binding"/>
    <property type="evidence" value="ECO:0007669"/>
    <property type="project" value="UniProtKB-UniRule"/>
</dbReference>
<dbReference type="GO" id="GO:0046429">
    <property type="term" value="F:4-hydroxy-3-methylbut-2-en-1-yl diphosphate synthase activity (ferredoxin)"/>
    <property type="evidence" value="ECO:0007669"/>
    <property type="project" value="UniProtKB-UniRule"/>
</dbReference>
<dbReference type="GO" id="GO:0141197">
    <property type="term" value="F:4-hydroxy-3-methylbut-2-enyl-diphosphate synthase activity (flavodoxin)"/>
    <property type="evidence" value="ECO:0007669"/>
    <property type="project" value="UniProtKB-EC"/>
</dbReference>
<dbReference type="GO" id="GO:0005506">
    <property type="term" value="F:iron ion binding"/>
    <property type="evidence" value="ECO:0007669"/>
    <property type="project" value="InterPro"/>
</dbReference>
<dbReference type="GO" id="GO:0019288">
    <property type="term" value="P:isopentenyl diphosphate biosynthetic process, methylerythritol 4-phosphate pathway"/>
    <property type="evidence" value="ECO:0007669"/>
    <property type="project" value="UniProtKB-UniRule"/>
</dbReference>
<dbReference type="GO" id="GO:0016114">
    <property type="term" value="P:terpenoid biosynthetic process"/>
    <property type="evidence" value="ECO:0007669"/>
    <property type="project" value="InterPro"/>
</dbReference>
<dbReference type="FunFam" id="3.30.413.10:FF:000012">
    <property type="entry name" value="4-hydroxy-3-methylbut-2-en-1-yl diphosphate synthase (flavodoxin)"/>
    <property type="match status" value="1"/>
</dbReference>
<dbReference type="Gene3D" id="3.20.20.20">
    <property type="entry name" value="Dihydropteroate synthase-like"/>
    <property type="match status" value="1"/>
</dbReference>
<dbReference type="Gene3D" id="3.30.413.10">
    <property type="entry name" value="Sulfite Reductase Hemoprotein, domain 1"/>
    <property type="match status" value="1"/>
</dbReference>
<dbReference type="HAMAP" id="MF_00159">
    <property type="entry name" value="IspG"/>
    <property type="match status" value="1"/>
</dbReference>
<dbReference type="InterPro" id="IPR011005">
    <property type="entry name" value="Dihydropteroate_synth-like_sf"/>
</dbReference>
<dbReference type="InterPro" id="IPR016425">
    <property type="entry name" value="IspG_bac"/>
</dbReference>
<dbReference type="InterPro" id="IPR004588">
    <property type="entry name" value="IspG_bac-typ"/>
</dbReference>
<dbReference type="InterPro" id="IPR045854">
    <property type="entry name" value="NO2/SO3_Rdtase_4Fe4S_sf"/>
</dbReference>
<dbReference type="NCBIfam" id="TIGR00612">
    <property type="entry name" value="ispG_gcpE"/>
    <property type="match status" value="1"/>
</dbReference>
<dbReference type="NCBIfam" id="NF001540">
    <property type="entry name" value="PRK00366.1"/>
    <property type="match status" value="1"/>
</dbReference>
<dbReference type="PANTHER" id="PTHR30454">
    <property type="entry name" value="4-HYDROXY-3-METHYLBUT-2-EN-1-YL DIPHOSPHATE SYNTHASE"/>
    <property type="match status" value="1"/>
</dbReference>
<dbReference type="PANTHER" id="PTHR30454:SF0">
    <property type="entry name" value="4-HYDROXY-3-METHYLBUT-2-EN-1-YL DIPHOSPHATE SYNTHASE (FERREDOXIN), CHLOROPLASTIC"/>
    <property type="match status" value="1"/>
</dbReference>
<dbReference type="Pfam" id="PF04551">
    <property type="entry name" value="GcpE"/>
    <property type="match status" value="1"/>
</dbReference>
<dbReference type="PIRSF" id="PIRSF004640">
    <property type="entry name" value="IspG"/>
    <property type="match status" value="1"/>
</dbReference>
<dbReference type="SUPFAM" id="SSF56014">
    <property type="entry name" value="Nitrite and sulphite reductase 4Fe-4S domain-like"/>
    <property type="match status" value="1"/>
</dbReference>
<name>ISPG_KORVE</name>
<reference key="1">
    <citation type="journal article" date="2009" name="Appl. Environ. Microbiol.">
        <title>Three genomes from the phylum Acidobacteria provide insight into the lifestyles of these microorganisms in soils.</title>
        <authorList>
            <person name="Ward N.L."/>
            <person name="Challacombe J.F."/>
            <person name="Janssen P.H."/>
            <person name="Henrissat B."/>
            <person name="Coutinho P.M."/>
            <person name="Wu M."/>
            <person name="Xie G."/>
            <person name="Haft D.H."/>
            <person name="Sait M."/>
            <person name="Badger J."/>
            <person name="Barabote R.D."/>
            <person name="Bradley B."/>
            <person name="Brettin T.S."/>
            <person name="Brinkac L.M."/>
            <person name="Bruce D."/>
            <person name="Creasy T."/>
            <person name="Daugherty S.C."/>
            <person name="Davidsen T.M."/>
            <person name="DeBoy R.T."/>
            <person name="Detter J.C."/>
            <person name="Dodson R.J."/>
            <person name="Durkin A.S."/>
            <person name="Ganapathy A."/>
            <person name="Gwinn-Giglio M."/>
            <person name="Han C.S."/>
            <person name="Khouri H."/>
            <person name="Kiss H."/>
            <person name="Kothari S.P."/>
            <person name="Madupu R."/>
            <person name="Nelson K.E."/>
            <person name="Nelson W.C."/>
            <person name="Paulsen I."/>
            <person name="Penn K."/>
            <person name="Ren Q."/>
            <person name="Rosovitz M.J."/>
            <person name="Selengut J.D."/>
            <person name="Shrivastava S."/>
            <person name="Sullivan S.A."/>
            <person name="Tapia R."/>
            <person name="Thompson L.S."/>
            <person name="Watkins K.L."/>
            <person name="Yang Q."/>
            <person name="Yu C."/>
            <person name="Zafar N."/>
            <person name="Zhou L."/>
            <person name="Kuske C.R."/>
        </authorList>
    </citation>
    <scope>NUCLEOTIDE SEQUENCE [LARGE SCALE GENOMIC DNA]</scope>
    <source>
        <strain>Ellin345</strain>
    </source>
</reference>
<comment type="function">
    <text evidence="1">Converts 2C-methyl-D-erythritol 2,4-cyclodiphosphate (ME-2,4cPP) into 1-hydroxy-2-methyl-2-(E)-butenyl 4-diphosphate.</text>
</comment>
<comment type="catalytic activity">
    <reaction evidence="1">
        <text>(2E)-4-hydroxy-3-methylbut-2-enyl diphosphate + oxidized [flavodoxin] + H2O + 2 H(+) = 2-C-methyl-D-erythritol 2,4-cyclic diphosphate + reduced [flavodoxin]</text>
        <dbReference type="Rhea" id="RHEA:43604"/>
        <dbReference type="Rhea" id="RHEA-COMP:10622"/>
        <dbReference type="Rhea" id="RHEA-COMP:10623"/>
        <dbReference type="ChEBI" id="CHEBI:15377"/>
        <dbReference type="ChEBI" id="CHEBI:15378"/>
        <dbReference type="ChEBI" id="CHEBI:57618"/>
        <dbReference type="ChEBI" id="CHEBI:58210"/>
        <dbReference type="ChEBI" id="CHEBI:58483"/>
        <dbReference type="ChEBI" id="CHEBI:128753"/>
        <dbReference type="EC" id="1.17.7.3"/>
    </reaction>
</comment>
<comment type="cofactor">
    <cofactor evidence="1">
        <name>[4Fe-4S] cluster</name>
        <dbReference type="ChEBI" id="CHEBI:49883"/>
    </cofactor>
    <text evidence="1">Binds 1 [4Fe-4S] cluster.</text>
</comment>
<comment type="pathway">
    <text evidence="1">Isoprenoid biosynthesis; isopentenyl diphosphate biosynthesis via DXP pathway; isopentenyl diphosphate from 1-deoxy-D-xylulose 5-phosphate: step 5/6.</text>
</comment>
<comment type="similarity">
    <text evidence="1">Belongs to the IspG family.</text>
</comment>
<organism>
    <name type="scientific">Koribacter versatilis (strain Ellin345)</name>
    <dbReference type="NCBI Taxonomy" id="204669"/>
    <lineage>
        <taxon>Bacteria</taxon>
        <taxon>Pseudomonadati</taxon>
        <taxon>Acidobacteriota</taxon>
        <taxon>Terriglobia</taxon>
        <taxon>Terriglobales</taxon>
        <taxon>Candidatus Korobacteraceae</taxon>
        <taxon>Candidatus Korobacter</taxon>
    </lineage>
</organism>
<gene>
    <name evidence="1" type="primary">ispG</name>
    <name type="ordered locus">Acid345_1423</name>
</gene>
<protein>
    <recommendedName>
        <fullName evidence="1">4-hydroxy-3-methylbut-2-en-1-yl diphosphate synthase (flavodoxin)</fullName>
        <ecNumber evidence="1">1.17.7.3</ecNumber>
    </recommendedName>
    <alternativeName>
        <fullName evidence="1">1-hydroxy-2-methyl-2-(E)-butenyl 4-diphosphate synthase</fullName>
    </alternativeName>
</protein>
<feature type="chain" id="PRO_1000123427" description="4-hydroxy-3-methylbut-2-en-1-yl diphosphate synthase (flavodoxin)">
    <location>
        <begin position="1"/>
        <end position="413"/>
    </location>
</feature>
<feature type="binding site" evidence="1">
    <location>
        <position position="298"/>
    </location>
    <ligand>
        <name>[4Fe-4S] cluster</name>
        <dbReference type="ChEBI" id="CHEBI:49883"/>
    </ligand>
</feature>
<feature type="binding site" evidence="1">
    <location>
        <position position="301"/>
    </location>
    <ligand>
        <name>[4Fe-4S] cluster</name>
        <dbReference type="ChEBI" id="CHEBI:49883"/>
    </ligand>
</feature>
<feature type="binding site" evidence="1">
    <location>
        <position position="344"/>
    </location>
    <ligand>
        <name>[4Fe-4S] cluster</name>
        <dbReference type="ChEBI" id="CHEBI:49883"/>
    </ligand>
</feature>
<feature type="binding site" evidence="1">
    <location>
        <position position="351"/>
    </location>
    <ligand>
        <name>[4Fe-4S] cluster</name>
        <dbReference type="ChEBI" id="CHEBI:49883"/>
    </ligand>
</feature>